<organism>
    <name type="scientific">Mus musculus</name>
    <name type="common">Mouse</name>
    <dbReference type="NCBI Taxonomy" id="10090"/>
    <lineage>
        <taxon>Eukaryota</taxon>
        <taxon>Metazoa</taxon>
        <taxon>Chordata</taxon>
        <taxon>Craniata</taxon>
        <taxon>Vertebrata</taxon>
        <taxon>Euteleostomi</taxon>
        <taxon>Mammalia</taxon>
        <taxon>Eutheria</taxon>
        <taxon>Euarchontoglires</taxon>
        <taxon>Glires</taxon>
        <taxon>Rodentia</taxon>
        <taxon>Myomorpha</taxon>
        <taxon>Muroidea</taxon>
        <taxon>Muridae</taxon>
        <taxon>Murinae</taxon>
        <taxon>Mus</taxon>
        <taxon>Mus</taxon>
    </lineage>
</organism>
<sequence length="199" mass="22502">MNPRKKVDLKLIIVGALGVGKTSLLHQYVHKTFFEEYQTTLGASILSKIIILDDTTLKLQIWDTGGQERFRSMVSTFYKGSDGCILAFDVTDPESFEALDIWRDDVLAKIIPMEQSYPMVVLGNKIDLEDRKVSQEVVHGWCKEKDMPYFEVSAKNDINVVQAFEVLASRALLRYQGTAENHLIDSIKLSPGQPKSRCC</sequence>
<feature type="chain" id="PRO_0000121126" description="Ras-related protein Rab-7b">
    <location>
        <begin position="1"/>
        <end position="199"/>
    </location>
</feature>
<feature type="short sequence motif" description="Switch 1" evidence="2">
    <location>
        <begin position="28"/>
        <end position="41"/>
    </location>
</feature>
<feature type="short sequence motif" description="Switch 2" evidence="2">
    <location>
        <begin position="67"/>
        <end position="82"/>
    </location>
</feature>
<feature type="binding site" evidence="1">
    <location>
        <begin position="15"/>
        <end position="22"/>
    </location>
    <ligand>
        <name>GTP</name>
        <dbReference type="ChEBI" id="CHEBI:37565"/>
    </ligand>
</feature>
<feature type="binding site" evidence="1">
    <location>
        <begin position="34"/>
        <end position="40"/>
    </location>
    <ligand>
        <name>GTP</name>
        <dbReference type="ChEBI" id="CHEBI:37565"/>
    </ligand>
</feature>
<feature type="binding site" evidence="1">
    <location>
        <begin position="63"/>
        <end position="67"/>
    </location>
    <ligand>
        <name>GTP</name>
        <dbReference type="ChEBI" id="CHEBI:37565"/>
    </ligand>
</feature>
<feature type="binding site" evidence="1">
    <location>
        <begin position="124"/>
        <end position="127"/>
    </location>
    <ligand>
        <name>GTP</name>
        <dbReference type="ChEBI" id="CHEBI:37565"/>
    </ligand>
</feature>
<feature type="binding site" evidence="1">
    <location>
        <begin position="154"/>
        <end position="155"/>
    </location>
    <ligand>
        <name>GTP</name>
        <dbReference type="ChEBI" id="CHEBI:37565"/>
    </ligand>
</feature>
<feature type="modified residue" description="Phosphoserine" evidence="8">
    <location>
        <position position="186"/>
    </location>
</feature>
<feature type="lipid moiety-binding region" description="S-geranylgeranyl cysteine" evidence="1">
    <location>
        <position position="198"/>
    </location>
</feature>
<feature type="lipid moiety-binding region" description="S-geranylgeranyl cysteine" evidence="1">
    <location>
        <position position="199"/>
    </location>
</feature>
<feature type="splice variant" id="VSP_011108" description="In isoform 2." evidence="6">
    <location>
        <begin position="133"/>
        <end position="174"/>
    </location>
</feature>
<feature type="sequence conflict" description="In Ref. 2; BAC29291." evidence="7" ref="2">
    <original>I</original>
    <variation>V</variation>
    <location>
        <position position="187"/>
    </location>
</feature>
<protein>
    <recommendedName>
        <fullName>Ras-related protein Rab-7b</fullName>
    </recommendedName>
</protein>
<dbReference type="EMBL" id="AB232641">
    <property type="protein sequence ID" value="BAF02903.1"/>
    <property type="molecule type" value="mRNA"/>
</dbReference>
<dbReference type="EMBL" id="AK030688">
    <property type="protein sequence ID" value="BAC27078.1"/>
    <property type="molecule type" value="mRNA"/>
</dbReference>
<dbReference type="EMBL" id="AK036056">
    <property type="protein sequence ID" value="BAC29291.1"/>
    <property type="molecule type" value="mRNA"/>
</dbReference>
<dbReference type="EMBL" id="AK079999">
    <property type="protein sequence ID" value="BAC37802.1"/>
    <property type="molecule type" value="mRNA"/>
</dbReference>
<dbReference type="EMBL" id="CH466520">
    <property type="protein sequence ID" value="EDL39704.1"/>
    <property type="molecule type" value="Genomic_DNA"/>
</dbReference>
<dbReference type="CCDS" id="CCDS15272.1">
    <molecule id="Q8VEA8-1"/>
</dbReference>
<dbReference type="CCDS" id="CCDS78677.1">
    <molecule id="Q8VEA8-2"/>
</dbReference>
<dbReference type="RefSeq" id="NP_001298025.1">
    <molecule id="Q8VEA8-2"/>
    <property type="nucleotide sequence ID" value="NM_001311096.1"/>
</dbReference>
<dbReference type="RefSeq" id="NP_663484.1">
    <molecule id="Q8VEA8-1"/>
    <property type="nucleotide sequence ID" value="NM_145509.3"/>
</dbReference>
<dbReference type="RefSeq" id="XP_006529493.1">
    <molecule id="Q8VEA8-1"/>
    <property type="nucleotide sequence ID" value="XM_006529430.3"/>
</dbReference>
<dbReference type="RefSeq" id="XP_036019827.1">
    <molecule id="Q8VEA8-2"/>
    <property type="nucleotide sequence ID" value="XM_036163934.1"/>
</dbReference>
<dbReference type="SMR" id="Q8VEA8"/>
<dbReference type="BioGRID" id="230511">
    <property type="interactions" value="1"/>
</dbReference>
<dbReference type="FunCoup" id="Q8VEA8">
    <property type="interactions" value="536"/>
</dbReference>
<dbReference type="STRING" id="10090.ENSMUSP00000065456"/>
<dbReference type="iPTMnet" id="Q8VEA8"/>
<dbReference type="PhosphoSitePlus" id="Q8VEA8"/>
<dbReference type="SwissPalm" id="Q8VEA8"/>
<dbReference type="jPOST" id="Q8VEA8"/>
<dbReference type="PaxDb" id="10090-ENSMUSP00000065456"/>
<dbReference type="ProteomicsDB" id="253152">
    <molecule id="Q8VEA8-1"/>
</dbReference>
<dbReference type="ProteomicsDB" id="253153">
    <molecule id="Q8VEA8-2"/>
</dbReference>
<dbReference type="Pumba" id="Q8VEA8"/>
<dbReference type="Antibodypedia" id="72889">
    <property type="antibodies" value="141 antibodies from 19 providers"/>
</dbReference>
<dbReference type="DNASU" id="226421"/>
<dbReference type="Ensembl" id="ENSMUST00000064664.10">
    <molecule id="Q8VEA8-2"/>
    <property type="protein sequence ID" value="ENSMUSP00000066452.4"/>
    <property type="gene ID" value="ENSMUSG00000052688.13"/>
</dbReference>
<dbReference type="Ensembl" id="ENSMUST00000064679.9">
    <molecule id="Q8VEA8-1"/>
    <property type="protein sequence ID" value="ENSMUSP00000065456.3"/>
    <property type="gene ID" value="ENSMUSG00000052688.13"/>
</dbReference>
<dbReference type="GeneID" id="226421"/>
<dbReference type="KEGG" id="mmu:226421"/>
<dbReference type="UCSC" id="uc007cnp.1">
    <molecule id="Q8VEA8-1"/>
    <property type="organism name" value="mouse"/>
</dbReference>
<dbReference type="AGR" id="MGI:2442295"/>
<dbReference type="CTD" id="338382"/>
<dbReference type="MGI" id="MGI:2442295">
    <property type="gene designation" value="Rab7b"/>
</dbReference>
<dbReference type="VEuPathDB" id="HostDB:ENSMUSG00000052688"/>
<dbReference type="eggNOG" id="KOG0394">
    <property type="taxonomic scope" value="Eukaryota"/>
</dbReference>
<dbReference type="GeneTree" id="ENSGT00940000161943"/>
<dbReference type="HOGENOM" id="CLU_041217_10_6_1"/>
<dbReference type="InParanoid" id="Q8VEA8"/>
<dbReference type="OMA" id="MQIWDTG"/>
<dbReference type="OrthoDB" id="1436450at2759"/>
<dbReference type="PhylomeDB" id="Q8VEA8"/>
<dbReference type="TreeFam" id="TF326442"/>
<dbReference type="Reactome" id="R-MMU-8854214">
    <property type="pathway name" value="TBC/RABGAPs"/>
</dbReference>
<dbReference type="Reactome" id="R-MMU-8873719">
    <property type="pathway name" value="RAB geranylgeranylation"/>
</dbReference>
<dbReference type="Reactome" id="R-MMU-8876198">
    <property type="pathway name" value="RAB GEFs exchange GTP for GDP on RABs"/>
</dbReference>
<dbReference type="BioGRID-ORCS" id="226421">
    <property type="hits" value="1 hit in 76 CRISPR screens"/>
</dbReference>
<dbReference type="ChiTaRS" id="Rab7b">
    <property type="organism name" value="mouse"/>
</dbReference>
<dbReference type="PRO" id="PR:Q8VEA8"/>
<dbReference type="Proteomes" id="UP000000589">
    <property type="component" value="Chromosome 1"/>
</dbReference>
<dbReference type="RNAct" id="Q8VEA8">
    <property type="molecule type" value="protein"/>
</dbReference>
<dbReference type="Bgee" id="ENSMUSG00000052688">
    <property type="expression patterns" value="Expressed in stroma of bone marrow and 172 other cell types or tissues"/>
</dbReference>
<dbReference type="ExpressionAtlas" id="Q8VEA8">
    <property type="expression patterns" value="baseline and differential"/>
</dbReference>
<dbReference type="GO" id="GO:0005794">
    <property type="term" value="C:Golgi apparatus"/>
    <property type="evidence" value="ECO:0000250"/>
    <property type="project" value="UniProtKB"/>
</dbReference>
<dbReference type="GO" id="GO:0005770">
    <property type="term" value="C:late endosome"/>
    <property type="evidence" value="ECO:0000314"/>
    <property type="project" value="UniProtKB"/>
</dbReference>
<dbReference type="GO" id="GO:0005764">
    <property type="term" value="C:lysosome"/>
    <property type="evidence" value="ECO:0000314"/>
    <property type="project" value="UniProtKB"/>
</dbReference>
<dbReference type="GO" id="GO:0045335">
    <property type="term" value="C:phagocytic vesicle"/>
    <property type="evidence" value="ECO:0000314"/>
    <property type="project" value="MGI"/>
</dbReference>
<dbReference type="GO" id="GO:0030670">
    <property type="term" value="C:phagocytic vesicle membrane"/>
    <property type="evidence" value="ECO:0007669"/>
    <property type="project" value="UniProtKB-SubCell"/>
</dbReference>
<dbReference type="GO" id="GO:0005802">
    <property type="term" value="C:trans-Golgi network"/>
    <property type="evidence" value="ECO:0000250"/>
    <property type="project" value="UniProtKB"/>
</dbReference>
<dbReference type="GO" id="GO:0005525">
    <property type="term" value="F:GTP binding"/>
    <property type="evidence" value="ECO:0007669"/>
    <property type="project" value="UniProtKB-KW"/>
</dbReference>
<dbReference type="GO" id="GO:0003924">
    <property type="term" value="F:GTPase activity"/>
    <property type="evidence" value="ECO:0007669"/>
    <property type="project" value="InterPro"/>
</dbReference>
<dbReference type="GO" id="GO:0071346">
    <property type="term" value="P:cellular response to type II interferon"/>
    <property type="evidence" value="ECO:0000314"/>
    <property type="project" value="MGI"/>
</dbReference>
<dbReference type="GO" id="GO:0034499">
    <property type="term" value="P:late endosome to Golgi transport"/>
    <property type="evidence" value="ECO:0000250"/>
    <property type="project" value="UniProtKB"/>
</dbReference>
<dbReference type="GO" id="GO:0034144">
    <property type="term" value="P:negative regulation of toll-like receptor 4 signaling pathway"/>
    <property type="evidence" value="ECO:0000315"/>
    <property type="project" value="UniProtKB"/>
</dbReference>
<dbReference type="GO" id="GO:0034164">
    <property type="term" value="P:negative regulation of toll-like receptor 9 signaling pathway"/>
    <property type="evidence" value="ECO:0000315"/>
    <property type="project" value="UniProtKB"/>
</dbReference>
<dbReference type="GO" id="GO:0032755">
    <property type="term" value="P:positive regulation of interleukin-6 production"/>
    <property type="evidence" value="ECO:0000250"/>
    <property type="project" value="UniProtKB"/>
</dbReference>
<dbReference type="GO" id="GO:0045654">
    <property type="term" value="P:positive regulation of megakaryocyte differentiation"/>
    <property type="evidence" value="ECO:0000250"/>
    <property type="project" value="UniProtKB"/>
</dbReference>
<dbReference type="GO" id="GO:0051092">
    <property type="term" value="P:positive regulation of NF-kappaB transcription factor activity"/>
    <property type="evidence" value="ECO:0000250"/>
    <property type="project" value="UniProtKB"/>
</dbReference>
<dbReference type="GO" id="GO:0015031">
    <property type="term" value="P:protein transport"/>
    <property type="evidence" value="ECO:0007669"/>
    <property type="project" value="UniProtKB-KW"/>
</dbReference>
<dbReference type="CDD" id="cd00154">
    <property type="entry name" value="Rab"/>
    <property type="match status" value="1"/>
</dbReference>
<dbReference type="FunFam" id="3.40.50.300:FF:000751">
    <property type="entry name" value="Rab family GTPase, putative"/>
    <property type="match status" value="1"/>
</dbReference>
<dbReference type="Gene3D" id="3.40.50.300">
    <property type="entry name" value="P-loop containing nucleotide triphosphate hydrolases"/>
    <property type="match status" value="1"/>
</dbReference>
<dbReference type="InterPro" id="IPR027417">
    <property type="entry name" value="P-loop_NTPase"/>
</dbReference>
<dbReference type="InterPro" id="IPR005225">
    <property type="entry name" value="Small_GTP-bd"/>
</dbReference>
<dbReference type="InterPro" id="IPR001806">
    <property type="entry name" value="Small_GTPase"/>
</dbReference>
<dbReference type="NCBIfam" id="TIGR00231">
    <property type="entry name" value="small_GTP"/>
    <property type="match status" value="1"/>
</dbReference>
<dbReference type="PANTHER" id="PTHR47981">
    <property type="entry name" value="RAB FAMILY"/>
    <property type="match status" value="1"/>
</dbReference>
<dbReference type="PANTHER" id="PTHR47981:SF22">
    <property type="entry name" value="RAS-RELATED PROTEIN RAB-7B"/>
    <property type="match status" value="1"/>
</dbReference>
<dbReference type="Pfam" id="PF00071">
    <property type="entry name" value="Ras"/>
    <property type="match status" value="1"/>
</dbReference>
<dbReference type="PRINTS" id="PR00449">
    <property type="entry name" value="RASTRNSFRMNG"/>
</dbReference>
<dbReference type="SMART" id="SM00175">
    <property type="entry name" value="RAB"/>
    <property type="match status" value="1"/>
</dbReference>
<dbReference type="SMART" id="SM00176">
    <property type="entry name" value="RAN"/>
    <property type="match status" value="1"/>
</dbReference>
<dbReference type="SMART" id="SM00173">
    <property type="entry name" value="RAS"/>
    <property type="match status" value="1"/>
</dbReference>
<dbReference type="SMART" id="SM00174">
    <property type="entry name" value="RHO"/>
    <property type="match status" value="1"/>
</dbReference>
<dbReference type="SUPFAM" id="SSF52540">
    <property type="entry name" value="P-loop containing nucleoside triphosphate hydrolases"/>
    <property type="match status" value="1"/>
</dbReference>
<dbReference type="PROSITE" id="PS51419">
    <property type="entry name" value="RAB"/>
    <property type="match status" value="1"/>
</dbReference>
<evidence type="ECO:0000250" key="1"/>
<evidence type="ECO:0000250" key="2">
    <source>
        <dbReference type="UniProtKB" id="P51149"/>
    </source>
</evidence>
<evidence type="ECO:0000250" key="3">
    <source>
        <dbReference type="UniProtKB" id="Q96AH8"/>
    </source>
</evidence>
<evidence type="ECO:0000269" key="4">
    <source>
    </source>
</evidence>
<evidence type="ECO:0000269" key="5">
    <source>
    </source>
</evidence>
<evidence type="ECO:0000303" key="6">
    <source>
    </source>
</evidence>
<evidence type="ECO:0000305" key="7"/>
<evidence type="ECO:0007744" key="8">
    <source>
    </source>
</evidence>
<reference key="1">
    <citation type="journal article" date="2006" name="Genes Cells">
        <title>Screening for target Rabs of TBC (Tre-2/Bub2/Cdc16) domain-containing proteins based on their Rab-binding activity.</title>
        <authorList>
            <person name="Itoh T."/>
            <person name="Satoh M."/>
            <person name="Kanno E."/>
            <person name="Fukuda M."/>
        </authorList>
    </citation>
    <scope>NUCLEOTIDE SEQUENCE [MRNA] (ISOFORM 1)</scope>
    <source>
        <strain>BALB/cJ</strain>
    </source>
</reference>
<reference key="2">
    <citation type="journal article" date="2005" name="Science">
        <title>The transcriptional landscape of the mammalian genome.</title>
        <authorList>
            <person name="Carninci P."/>
            <person name="Kasukawa T."/>
            <person name="Katayama S."/>
            <person name="Gough J."/>
            <person name="Frith M.C."/>
            <person name="Maeda N."/>
            <person name="Oyama R."/>
            <person name="Ravasi T."/>
            <person name="Lenhard B."/>
            <person name="Wells C."/>
            <person name="Kodzius R."/>
            <person name="Shimokawa K."/>
            <person name="Bajic V.B."/>
            <person name="Brenner S.E."/>
            <person name="Batalov S."/>
            <person name="Forrest A.R."/>
            <person name="Zavolan M."/>
            <person name="Davis M.J."/>
            <person name="Wilming L.G."/>
            <person name="Aidinis V."/>
            <person name="Allen J.E."/>
            <person name="Ambesi-Impiombato A."/>
            <person name="Apweiler R."/>
            <person name="Aturaliya R.N."/>
            <person name="Bailey T.L."/>
            <person name="Bansal M."/>
            <person name="Baxter L."/>
            <person name="Beisel K.W."/>
            <person name="Bersano T."/>
            <person name="Bono H."/>
            <person name="Chalk A.M."/>
            <person name="Chiu K.P."/>
            <person name="Choudhary V."/>
            <person name="Christoffels A."/>
            <person name="Clutterbuck D.R."/>
            <person name="Crowe M.L."/>
            <person name="Dalla E."/>
            <person name="Dalrymple B.P."/>
            <person name="de Bono B."/>
            <person name="Della Gatta G."/>
            <person name="di Bernardo D."/>
            <person name="Down T."/>
            <person name="Engstrom P."/>
            <person name="Fagiolini M."/>
            <person name="Faulkner G."/>
            <person name="Fletcher C.F."/>
            <person name="Fukushima T."/>
            <person name="Furuno M."/>
            <person name="Futaki S."/>
            <person name="Gariboldi M."/>
            <person name="Georgii-Hemming P."/>
            <person name="Gingeras T.R."/>
            <person name="Gojobori T."/>
            <person name="Green R.E."/>
            <person name="Gustincich S."/>
            <person name="Harbers M."/>
            <person name="Hayashi Y."/>
            <person name="Hensch T.K."/>
            <person name="Hirokawa N."/>
            <person name="Hill D."/>
            <person name="Huminiecki L."/>
            <person name="Iacono M."/>
            <person name="Ikeo K."/>
            <person name="Iwama A."/>
            <person name="Ishikawa T."/>
            <person name="Jakt M."/>
            <person name="Kanapin A."/>
            <person name="Katoh M."/>
            <person name="Kawasawa Y."/>
            <person name="Kelso J."/>
            <person name="Kitamura H."/>
            <person name="Kitano H."/>
            <person name="Kollias G."/>
            <person name="Krishnan S.P."/>
            <person name="Kruger A."/>
            <person name="Kummerfeld S.K."/>
            <person name="Kurochkin I.V."/>
            <person name="Lareau L.F."/>
            <person name="Lazarevic D."/>
            <person name="Lipovich L."/>
            <person name="Liu J."/>
            <person name="Liuni S."/>
            <person name="McWilliam S."/>
            <person name="Madan Babu M."/>
            <person name="Madera M."/>
            <person name="Marchionni L."/>
            <person name="Matsuda H."/>
            <person name="Matsuzawa S."/>
            <person name="Miki H."/>
            <person name="Mignone F."/>
            <person name="Miyake S."/>
            <person name="Morris K."/>
            <person name="Mottagui-Tabar S."/>
            <person name="Mulder N."/>
            <person name="Nakano N."/>
            <person name="Nakauchi H."/>
            <person name="Ng P."/>
            <person name="Nilsson R."/>
            <person name="Nishiguchi S."/>
            <person name="Nishikawa S."/>
            <person name="Nori F."/>
            <person name="Ohara O."/>
            <person name="Okazaki Y."/>
            <person name="Orlando V."/>
            <person name="Pang K.C."/>
            <person name="Pavan W.J."/>
            <person name="Pavesi G."/>
            <person name="Pesole G."/>
            <person name="Petrovsky N."/>
            <person name="Piazza S."/>
            <person name="Reed J."/>
            <person name="Reid J.F."/>
            <person name="Ring B.Z."/>
            <person name="Ringwald M."/>
            <person name="Rost B."/>
            <person name="Ruan Y."/>
            <person name="Salzberg S.L."/>
            <person name="Sandelin A."/>
            <person name="Schneider C."/>
            <person name="Schoenbach C."/>
            <person name="Sekiguchi K."/>
            <person name="Semple C.A."/>
            <person name="Seno S."/>
            <person name="Sessa L."/>
            <person name="Sheng Y."/>
            <person name="Shibata Y."/>
            <person name="Shimada H."/>
            <person name="Shimada K."/>
            <person name="Silva D."/>
            <person name="Sinclair B."/>
            <person name="Sperling S."/>
            <person name="Stupka E."/>
            <person name="Sugiura K."/>
            <person name="Sultana R."/>
            <person name="Takenaka Y."/>
            <person name="Taki K."/>
            <person name="Tammoja K."/>
            <person name="Tan S.L."/>
            <person name="Tang S."/>
            <person name="Taylor M.S."/>
            <person name="Tegner J."/>
            <person name="Teichmann S.A."/>
            <person name="Ueda H.R."/>
            <person name="van Nimwegen E."/>
            <person name="Verardo R."/>
            <person name="Wei C.L."/>
            <person name="Yagi K."/>
            <person name="Yamanishi H."/>
            <person name="Zabarovsky E."/>
            <person name="Zhu S."/>
            <person name="Zimmer A."/>
            <person name="Hide W."/>
            <person name="Bult C."/>
            <person name="Grimmond S.M."/>
            <person name="Teasdale R.D."/>
            <person name="Liu E.T."/>
            <person name="Brusic V."/>
            <person name="Quackenbush J."/>
            <person name="Wahlestedt C."/>
            <person name="Mattick J.S."/>
            <person name="Hume D.A."/>
            <person name="Kai C."/>
            <person name="Sasaki D."/>
            <person name="Tomaru Y."/>
            <person name="Fukuda S."/>
            <person name="Kanamori-Katayama M."/>
            <person name="Suzuki M."/>
            <person name="Aoki J."/>
            <person name="Arakawa T."/>
            <person name="Iida J."/>
            <person name="Imamura K."/>
            <person name="Itoh M."/>
            <person name="Kato T."/>
            <person name="Kawaji H."/>
            <person name="Kawagashira N."/>
            <person name="Kawashima T."/>
            <person name="Kojima M."/>
            <person name="Kondo S."/>
            <person name="Konno H."/>
            <person name="Nakano K."/>
            <person name="Ninomiya N."/>
            <person name="Nishio T."/>
            <person name="Okada M."/>
            <person name="Plessy C."/>
            <person name="Shibata K."/>
            <person name="Shiraki T."/>
            <person name="Suzuki S."/>
            <person name="Tagami M."/>
            <person name="Waki K."/>
            <person name="Watahiki A."/>
            <person name="Okamura-Oho Y."/>
            <person name="Suzuki H."/>
            <person name="Kawai J."/>
            <person name="Hayashizaki Y."/>
        </authorList>
    </citation>
    <scope>NUCLEOTIDE SEQUENCE [LARGE SCALE MRNA] (ISOFORMS 1 AND 2)</scope>
    <source>
        <strain>C57BL/6J</strain>
        <tissue>Blood vessel</tissue>
        <tissue>Cerebellum</tissue>
        <tissue>Head</tissue>
    </source>
</reference>
<reference key="3">
    <citation type="submission" date="2005-09" db="EMBL/GenBank/DDBJ databases">
        <authorList>
            <person name="Mural R.J."/>
            <person name="Adams M.D."/>
            <person name="Myers E.W."/>
            <person name="Smith H.O."/>
            <person name="Venter J.C."/>
        </authorList>
    </citation>
    <scope>NUCLEOTIDE SEQUENCE [LARGE SCALE GENOMIC DNA]</scope>
</reference>
<reference key="4">
    <citation type="journal article" date="2007" name="Blood">
        <title>Lysosome-associated small Rab GTPase Rab7b negatively regulates TLR4 signaling in macrophages by promoting lysosomal degradation of TLR4.</title>
        <authorList>
            <person name="Wang Y."/>
            <person name="Chen T."/>
            <person name="Han C."/>
            <person name="He D."/>
            <person name="Liu H."/>
            <person name="An H."/>
            <person name="Cai Z."/>
            <person name="Cao X."/>
        </authorList>
    </citation>
    <scope>FUNCTION</scope>
    <scope>SUBCELLULAR LOCATION</scope>
</reference>
<reference key="5">
    <citation type="journal article" date="2009" name="Immunity">
        <title>The phagosomal proteome in interferon-gamma-activated macrophages.</title>
        <authorList>
            <person name="Trost M."/>
            <person name="English L."/>
            <person name="Lemieux S."/>
            <person name="Courcelles M."/>
            <person name="Desjardins M."/>
            <person name="Thibault P."/>
        </authorList>
    </citation>
    <scope>PHOSPHORYLATION [LARGE SCALE ANALYSIS] AT SER-186</scope>
    <scope>IDENTIFICATION BY MASS SPECTROMETRY [LARGE SCALE ANALYSIS]</scope>
</reference>
<reference key="6">
    <citation type="journal article" date="2009" name="J. Immunol.">
        <title>Late endosome/lysosome-localized Rab7b suppresses TLR9-initiated proinflammatory cytokine and type I IFN production in macrophages.</title>
        <authorList>
            <person name="Yao M."/>
            <person name="Liu X."/>
            <person name="Li D."/>
            <person name="Chen T."/>
            <person name="Cai Z."/>
            <person name="Cao X."/>
        </authorList>
    </citation>
    <scope>FUNCTION</scope>
    <scope>SUBCELLULAR LOCATION</scope>
</reference>
<reference key="7">
    <citation type="journal article" date="2010" name="Cell">
        <title>A tissue-specific atlas of mouse protein phosphorylation and expression.</title>
        <authorList>
            <person name="Huttlin E.L."/>
            <person name="Jedrychowski M.P."/>
            <person name="Elias J.E."/>
            <person name="Goswami T."/>
            <person name="Rad R."/>
            <person name="Beausoleil S.A."/>
            <person name="Villen J."/>
            <person name="Haas W."/>
            <person name="Sowa M.E."/>
            <person name="Gygi S.P."/>
        </authorList>
    </citation>
    <scope>IDENTIFICATION BY MASS SPECTROMETRY [LARGE SCALE ANALYSIS]</scope>
    <source>
        <tissue>Testis</tissue>
    </source>
</reference>
<accession>Q8VEA8</accession>
<accession>Q0PD09</accession>
<accession>Q8BJT0</accession>
<accession>Q8BZB1</accession>
<keyword id="KW-0025">Alternative splicing</keyword>
<keyword id="KW-0968">Cytoplasmic vesicle</keyword>
<keyword id="KW-0967">Endosome</keyword>
<keyword id="KW-0333">Golgi apparatus</keyword>
<keyword id="KW-0342">GTP-binding</keyword>
<keyword id="KW-0449">Lipoprotein</keyword>
<keyword id="KW-0458">Lysosome</keyword>
<keyword id="KW-0472">Membrane</keyword>
<keyword id="KW-0547">Nucleotide-binding</keyword>
<keyword id="KW-0597">Phosphoprotein</keyword>
<keyword id="KW-0636">Prenylation</keyword>
<keyword id="KW-0653">Protein transport</keyword>
<keyword id="KW-1185">Reference proteome</keyword>
<keyword id="KW-0813">Transport</keyword>
<proteinExistence type="evidence at protein level"/>
<gene>
    <name type="primary">Rab7b</name>
</gene>
<comment type="function">
    <text evidence="4 5">Controls vesicular trafficking from endosomes to the trans-Golgi network (TGN). Acts as a negative regulator of TLR9 signaling and can suppress TLR9-triggered TNFA, IL6, and IFNB production in macrophages by promoting TLR9 lysosomal degradation. Also negatively regulates TLR4 signaling in macrophages by promoting lysosomal degradation of TLR4. Promotes megakaryocytic differentiation by increasing NF-kappa-B-dependent IL6 production and subsequently enhancing the association of STAT3 with GATA1. Not involved in the regulation of the EGF- and EGFR degradation pathway.</text>
</comment>
<comment type="subcellular location">
    <subcellularLocation>
        <location evidence="5">Late endosome</location>
    </subcellularLocation>
    <subcellularLocation>
        <location evidence="4 5">Lysosome</location>
    </subcellularLocation>
    <subcellularLocation>
        <location evidence="3">Golgi apparatus</location>
    </subcellularLocation>
    <subcellularLocation>
        <location evidence="3">Golgi apparatus</location>
        <location evidence="3">trans-Golgi network</location>
    </subcellularLocation>
    <subcellularLocation>
        <location evidence="3">Cytoplasmic vesicle</location>
        <location evidence="3">Phagosome</location>
    </subcellularLocation>
    <subcellularLocation>
        <location evidence="7">Cytoplasmic vesicle</location>
        <location evidence="7">Phagosome membrane</location>
        <topology evidence="7">Lipid-anchor</topology>
        <orientation evidence="7">Cytoplasmic side</orientation>
    </subcellularLocation>
    <text evidence="3">Recruited to phagosomes containing S.aureus or Mycobacterium.</text>
</comment>
<comment type="alternative products">
    <event type="alternative splicing"/>
    <isoform>
        <id>Q8VEA8-1</id>
        <name>1</name>
        <sequence type="displayed"/>
    </isoform>
    <isoform>
        <id>Q8VEA8-2</id>
        <name>2</name>
        <sequence type="described" ref="VSP_011108"/>
    </isoform>
</comment>
<comment type="domain">
    <text evidence="2">Switch 1, switch 2 and the interswitch regions are characteristic of Rab GTPases and mediate the interactions with Rab downstream effectors. The switch regions undergo conformational changes upon nucleotide binding which drive interaction with specific sets of effector proteins, with most effectors only binding to GTP-bound Rab.</text>
</comment>
<comment type="similarity">
    <text evidence="7">Belongs to the small GTPase superfamily. Rab family.</text>
</comment>
<name>RAB7B_MOUSE</name>